<keyword id="KW-0413">Isomerase</keyword>
<keyword id="KW-1185">Reference proteome</keyword>
<keyword id="KW-0697">Rotamase</keyword>
<feature type="chain" id="PRO_0000232965" description="Peptidyl-prolyl cis-trans isomerase-like 1">
    <location>
        <begin position="1"/>
        <end position="162"/>
    </location>
</feature>
<feature type="domain" description="PPIase cyclophilin-type" evidence="2">
    <location>
        <begin position="1"/>
        <end position="155"/>
    </location>
</feature>
<evidence type="ECO:0000250" key="1"/>
<evidence type="ECO:0000255" key="2">
    <source>
        <dbReference type="PROSITE-ProRule" id="PRU00156"/>
    </source>
</evidence>
<evidence type="ECO:0000305" key="3"/>
<accession>Q5ASQ0</accession>
<organism>
    <name type="scientific">Emericella nidulans (strain FGSC A4 / ATCC 38163 / CBS 112.46 / NRRL 194 / M139)</name>
    <name type="common">Aspergillus nidulans</name>
    <dbReference type="NCBI Taxonomy" id="227321"/>
    <lineage>
        <taxon>Eukaryota</taxon>
        <taxon>Fungi</taxon>
        <taxon>Dikarya</taxon>
        <taxon>Ascomycota</taxon>
        <taxon>Pezizomycotina</taxon>
        <taxon>Eurotiomycetes</taxon>
        <taxon>Eurotiomycetidae</taxon>
        <taxon>Eurotiales</taxon>
        <taxon>Aspergillaceae</taxon>
        <taxon>Aspergillus</taxon>
        <taxon>Aspergillus subgen. Nidulantes</taxon>
    </lineage>
</organism>
<protein>
    <recommendedName>
        <fullName>Peptidyl-prolyl cis-trans isomerase-like 1</fullName>
        <shortName>PPIase</shortName>
        <ecNumber>5.2.1.8</ecNumber>
    </recommendedName>
    <alternativeName>
        <fullName>Rotamase</fullName>
    </alternativeName>
</protein>
<gene>
    <name type="primary">cyp1</name>
    <name type="ORF">AN8680</name>
</gene>
<sequence length="162" mass="17835">MATDVTFDTSMGSFTVELYNSHAPKTCKNFATLAQRGYYNNVIFHRIIPNFMVQTGDPTGTGRGGSSIYGEKFEDEIRSDLKHTGAGILSMANSGPNTNGSQFFITLAPTPWLDGKHTIFGRVKSGMRIIQRMGLVKTNNEDRPLDEVKILRAKVVEAGSEE</sequence>
<comment type="function">
    <text evidence="1">PPIases accelerate the folding of proteins. It catalyzes the cis-trans isomerization of proline imidic peptide bonds in oligopeptides (By similarity).</text>
</comment>
<comment type="catalytic activity">
    <reaction>
        <text>[protein]-peptidylproline (omega=180) = [protein]-peptidylproline (omega=0)</text>
        <dbReference type="Rhea" id="RHEA:16237"/>
        <dbReference type="Rhea" id="RHEA-COMP:10747"/>
        <dbReference type="Rhea" id="RHEA-COMP:10748"/>
        <dbReference type="ChEBI" id="CHEBI:83833"/>
        <dbReference type="ChEBI" id="CHEBI:83834"/>
        <dbReference type="EC" id="5.2.1.8"/>
    </reaction>
</comment>
<comment type="similarity">
    <text evidence="3">Belongs to the cyclophilin-type PPIase family. PPIL1 subfamily.</text>
</comment>
<proteinExistence type="inferred from homology"/>
<name>PPIL1_EMENI</name>
<reference key="1">
    <citation type="journal article" date="2005" name="Nature">
        <title>Sequencing of Aspergillus nidulans and comparative analysis with A. fumigatus and A. oryzae.</title>
        <authorList>
            <person name="Galagan J.E."/>
            <person name="Calvo S.E."/>
            <person name="Cuomo C."/>
            <person name="Ma L.-J."/>
            <person name="Wortman J.R."/>
            <person name="Batzoglou S."/>
            <person name="Lee S.-I."/>
            <person name="Bastuerkmen M."/>
            <person name="Spevak C.C."/>
            <person name="Clutterbuck J."/>
            <person name="Kapitonov V."/>
            <person name="Jurka J."/>
            <person name="Scazzocchio C."/>
            <person name="Farman M.L."/>
            <person name="Butler J."/>
            <person name="Purcell S."/>
            <person name="Harris S."/>
            <person name="Braus G.H."/>
            <person name="Draht O."/>
            <person name="Busch S."/>
            <person name="D'Enfert C."/>
            <person name="Bouchier C."/>
            <person name="Goldman G.H."/>
            <person name="Bell-Pedersen D."/>
            <person name="Griffiths-Jones S."/>
            <person name="Doonan J.H."/>
            <person name="Yu J."/>
            <person name="Vienken K."/>
            <person name="Pain A."/>
            <person name="Freitag M."/>
            <person name="Selker E.U."/>
            <person name="Archer D.B."/>
            <person name="Penalva M.A."/>
            <person name="Oakley B.R."/>
            <person name="Momany M."/>
            <person name="Tanaka T."/>
            <person name="Kumagai T."/>
            <person name="Asai K."/>
            <person name="Machida M."/>
            <person name="Nierman W.C."/>
            <person name="Denning D.W."/>
            <person name="Caddick M.X."/>
            <person name="Hynes M."/>
            <person name="Paoletti M."/>
            <person name="Fischer R."/>
            <person name="Miller B.L."/>
            <person name="Dyer P.S."/>
            <person name="Sachs M.S."/>
            <person name="Osmani S.A."/>
            <person name="Birren B.W."/>
        </authorList>
    </citation>
    <scope>NUCLEOTIDE SEQUENCE [LARGE SCALE GENOMIC DNA]</scope>
    <source>
        <strain>FGSC A4 / ATCC 38163 / CBS 112.46 / NRRL 194 / M139</strain>
    </source>
</reference>
<reference key="2">
    <citation type="journal article" date="2009" name="Fungal Genet. Biol.">
        <title>The 2008 update of the Aspergillus nidulans genome annotation: a community effort.</title>
        <authorList>
            <person name="Wortman J.R."/>
            <person name="Gilsenan J.M."/>
            <person name="Joardar V."/>
            <person name="Deegan J."/>
            <person name="Clutterbuck J."/>
            <person name="Andersen M.R."/>
            <person name="Archer D."/>
            <person name="Bencina M."/>
            <person name="Braus G."/>
            <person name="Coutinho P."/>
            <person name="von Dohren H."/>
            <person name="Doonan J."/>
            <person name="Driessen A.J."/>
            <person name="Durek P."/>
            <person name="Espeso E."/>
            <person name="Fekete E."/>
            <person name="Flipphi M."/>
            <person name="Estrada C.G."/>
            <person name="Geysens S."/>
            <person name="Goldman G."/>
            <person name="de Groot P.W."/>
            <person name="Hansen K."/>
            <person name="Harris S.D."/>
            <person name="Heinekamp T."/>
            <person name="Helmstaedt K."/>
            <person name="Henrissat B."/>
            <person name="Hofmann G."/>
            <person name="Homan T."/>
            <person name="Horio T."/>
            <person name="Horiuchi H."/>
            <person name="James S."/>
            <person name="Jones M."/>
            <person name="Karaffa L."/>
            <person name="Karanyi Z."/>
            <person name="Kato M."/>
            <person name="Keller N."/>
            <person name="Kelly D.E."/>
            <person name="Kiel J.A."/>
            <person name="Kim J.M."/>
            <person name="van der Klei I.J."/>
            <person name="Klis F.M."/>
            <person name="Kovalchuk A."/>
            <person name="Krasevec N."/>
            <person name="Kubicek C.P."/>
            <person name="Liu B."/>
            <person name="Maccabe A."/>
            <person name="Meyer V."/>
            <person name="Mirabito P."/>
            <person name="Miskei M."/>
            <person name="Mos M."/>
            <person name="Mullins J."/>
            <person name="Nelson D.R."/>
            <person name="Nielsen J."/>
            <person name="Oakley B.R."/>
            <person name="Osmani S.A."/>
            <person name="Pakula T."/>
            <person name="Paszewski A."/>
            <person name="Paulsen I."/>
            <person name="Pilsyk S."/>
            <person name="Pocsi I."/>
            <person name="Punt P.J."/>
            <person name="Ram A.F."/>
            <person name="Ren Q."/>
            <person name="Robellet X."/>
            <person name="Robson G."/>
            <person name="Seiboth B."/>
            <person name="van Solingen P."/>
            <person name="Specht T."/>
            <person name="Sun J."/>
            <person name="Taheri-Talesh N."/>
            <person name="Takeshita N."/>
            <person name="Ussery D."/>
            <person name="vanKuyk P.A."/>
            <person name="Visser H."/>
            <person name="van de Vondervoort P.J."/>
            <person name="de Vries R.P."/>
            <person name="Walton J."/>
            <person name="Xiang X."/>
            <person name="Xiong Y."/>
            <person name="Zeng A.P."/>
            <person name="Brandt B.W."/>
            <person name="Cornell M.J."/>
            <person name="van den Hondel C.A."/>
            <person name="Visser J."/>
            <person name="Oliver S.G."/>
            <person name="Turner G."/>
        </authorList>
    </citation>
    <scope>GENOME REANNOTATION</scope>
    <source>
        <strain>FGSC A4 / ATCC 38163 / CBS 112.46 / NRRL 194 / M139</strain>
    </source>
</reference>
<dbReference type="EC" id="5.2.1.8"/>
<dbReference type="EMBL" id="AACD01000159">
    <property type="protein sequence ID" value="EAA60102.1"/>
    <property type="molecule type" value="Genomic_DNA"/>
</dbReference>
<dbReference type="EMBL" id="BN001303">
    <property type="status" value="NOT_ANNOTATED_CDS"/>
    <property type="molecule type" value="Genomic_DNA"/>
</dbReference>
<dbReference type="RefSeq" id="XP_681949.1">
    <property type="nucleotide sequence ID" value="XM_676857.1"/>
</dbReference>
<dbReference type="SMR" id="Q5ASQ0"/>
<dbReference type="STRING" id="227321.Q5ASQ0"/>
<dbReference type="VEuPathDB" id="FungiDB:AN8680"/>
<dbReference type="HOGENOM" id="CLU_012062_16_3_1"/>
<dbReference type="InParanoid" id="Q5ASQ0"/>
<dbReference type="Proteomes" id="UP000000560">
    <property type="component" value="Chromosome III"/>
</dbReference>
<dbReference type="GO" id="GO:0071013">
    <property type="term" value="C:catalytic step 2 spliceosome"/>
    <property type="evidence" value="ECO:0000318"/>
    <property type="project" value="GO_Central"/>
</dbReference>
<dbReference type="GO" id="GO:0003755">
    <property type="term" value="F:peptidyl-prolyl cis-trans isomerase activity"/>
    <property type="evidence" value="ECO:0000318"/>
    <property type="project" value="GO_Central"/>
</dbReference>
<dbReference type="GO" id="GO:0000398">
    <property type="term" value="P:mRNA splicing, via spliceosome"/>
    <property type="evidence" value="ECO:0000318"/>
    <property type="project" value="GO_Central"/>
</dbReference>
<dbReference type="GO" id="GO:0006457">
    <property type="term" value="P:protein folding"/>
    <property type="evidence" value="ECO:0000318"/>
    <property type="project" value="GO_Central"/>
</dbReference>
<dbReference type="FunFam" id="2.40.100.10:FF:000008">
    <property type="entry name" value="Peptidyl-prolyl cis-trans isomerase"/>
    <property type="match status" value="1"/>
</dbReference>
<dbReference type="Gene3D" id="2.40.100.10">
    <property type="entry name" value="Cyclophilin-like"/>
    <property type="match status" value="1"/>
</dbReference>
<dbReference type="InterPro" id="IPR029000">
    <property type="entry name" value="Cyclophilin-like_dom_sf"/>
</dbReference>
<dbReference type="InterPro" id="IPR024936">
    <property type="entry name" value="Cyclophilin-type_PPIase"/>
</dbReference>
<dbReference type="InterPro" id="IPR020892">
    <property type="entry name" value="Cyclophilin-type_PPIase_CS"/>
</dbReference>
<dbReference type="InterPro" id="IPR002130">
    <property type="entry name" value="Cyclophilin-type_PPIase_dom"/>
</dbReference>
<dbReference type="InterPro" id="IPR044666">
    <property type="entry name" value="Cyclophilin_A-like"/>
</dbReference>
<dbReference type="PANTHER" id="PTHR45625">
    <property type="entry name" value="PEPTIDYL-PROLYL CIS-TRANS ISOMERASE-RELATED"/>
    <property type="match status" value="1"/>
</dbReference>
<dbReference type="PANTHER" id="PTHR45625:SF4">
    <property type="entry name" value="PEPTIDYLPROLYL ISOMERASE DOMAIN AND WD REPEAT-CONTAINING PROTEIN 1"/>
    <property type="match status" value="1"/>
</dbReference>
<dbReference type="Pfam" id="PF00160">
    <property type="entry name" value="Pro_isomerase"/>
    <property type="match status" value="1"/>
</dbReference>
<dbReference type="PIRSF" id="PIRSF001467">
    <property type="entry name" value="Peptidylpro_ismrse"/>
    <property type="match status" value="1"/>
</dbReference>
<dbReference type="PRINTS" id="PR00153">
    <property type="entry name" value="CSAPPISMRASE"/>
</dbReference>
<dbReference type="SUPFAM" id="SSF50891">
    <property type="entry name" value="Cyclophilin-like"/>
    <property type="match status" value="1"/>
</dbReference>
<dbReference type="PROSITE" id="PS00170">
    <property type="entry name" value="CSA_PPIASE_1"/>
    <property type="match status" value="1"/>
</dbReference>
<dbReference type="PROSITE" id="PS50072">
    <property type="entry name" value="CSA_PPIASE_2"/>
    <property type="match status" value="1"/>
</dbReference>